<gene>
    <name type="primary">P/V</name>
</gene>
<reference key="1">
    <citation type="journal article" date="1990" name="EMBO J.">
        <title>Infectious measles virus from cloned cDNA.</title>
        <authorList>
            <person name="Ballart I."/>
            <person name="Eschle D."/>
            <person name="Cattaneo R."/>
            <person name="Schmid A."/>
            <person name="Metzler M."/>
            <person name="Chan J."/>
            <person name="Pifko-Hirst S."/>
            <person name="Udem S.A."/>
            <person name="Billeter M.A."/>
        </authorList>
    </citation>
    <scope>NUCLEOTIDE SEQUENCE [LARGE SCALE GENOMIC DNA]</scope>
</reference>
<reference key="2">
    <citation type="journal article" date="1995" name="EMBO J.">
        <title>Rescue of measles viruses from cloned DNA.</title>
        <authorList>
            <person name="Radecke F."/>
            <person name="Spielhofer P."/>
            <person name="Schneider H."/>
            <person name="Kaelin K."/>
            <person name="Huber M."/>
            <person name="Doetsch C."/>
            <person name="Christiansen G."/>
            <person name="Billeter M.A."/>
        </authorList>
    </citation>
    <scope>NUCLEOTIDE SEQUENCE [LARGE SCALE GENOMIC DNA]</scope>
</reference>
<reference key="3">
    <citation type="journal article" date="1995" name="Virology">
        <title>A comparison of nucleotide sequences of measles virus L genes derived from wild-type viruses and SSPE brain tissues.</title>
        <authorList>
            <person name="Komase K."/>
            <person name="Rima B."/>
            <person name="Pardowitz I."/>
            <person name="Kunz C."/>
            <person name="Billeter M.A."/>
            <person name="ter Meulen V."/>
            <person name="Baczko K."/>
        </authorList>
    </citation>
    <scope>NUCLEOTIDE SEQUENCE [LARGE SCALE GENOMIC DNA]</scope>
</reference>
<reference evidence="10" key="4">
    <citation type="journal article" date="2013" name="J. Virol.">
        <title>Structure of the tetramerization domain of measles virus phosphoprotein.</title>
        <authorList>
            <person name="Communie G."/>
            <person name="Crepin T."/>
            <person name="Maurin D."/>
            <person name="Jensen M.R."/>
            <person name="Blackledge M."/>
            <person name="Ruigrok R.W."/>
        </authorList>
    </citation>
    <scope>X-RAY CRYSTALLOGRAPHY (2.07 ANGSTROMS) OF 304-377</scope>
    <scope>SUBUNIT</scope>
    <scope>DOMAIN</scope>
</reference>
<reference evidence="11" key="5">
    <citation type="journal article" date="2019" name="Sci. Adv.">
        <title>Regulation of measles virus gene expression by P protein coiled-coil properties.</title>
        <authorList>
            <person name="Bloyet L.M."/>
            <person name="Schramm A."/>
            <person name="Lazert C."/>
            <person name="Raynal B."/>
            <person name="Hologne M."/>
            <person name="Walker O."/>
            <person name="Longhi S."/>
            <person name="Gerlier D."/>
        </authorList>
    </citation>
    <scope>X-RAY CRYSTALLOGRAPHY (2.30 ANGSTROMS) OF 304-375 IN COMPLEX WITH CA(2+)</scope>
    <scope>INTERACTION WITH POLYMERASE L</scope>
</reference>
<dbReference type="EMBL" id="Z66517">
    <property type="protein sequence ID" value="CAA91364.1"/>
    <property type="molecule type" value="Genomic_RNA"/>
</dbReference>
<dbReference type="PDB" id="3ZDO">
    <property type="method" value="X-ray"/>
    <property type="resolution" value="2.07 A"/>
    <property type="chains" value="A/B/C/D/E/F/G/H=304-377"/>
</dbReference>
<dbReference type="PDB" id="6HTL">
    <property type="method" value="X-ray"/>
    <property type="resolution" value="2.30 A"/>
    <property type="chains" value="A=304-375"/>
</dbReference>
<dbReference type="PDBsum" id="3ZDO"/>
<dbReference type="PDBsum" id="6HTL"/>
<dbReference type="SMR" id="Q83623"/>
<dbReference type="Proteomes" id="UP000100252">
    <property type="component" value="Genome"/>
</dbReference>
<dbReference type="GO" id="GO:0046872">
    <property type="term" value="F:metal ion binding"/>
    <property type="evidence" value="ECO:0007669"/>
    <property type="project" value="UniProtKB-KW"/>
</dbReference>
<dbReference type="GO" id="GO:0003723">
    <property type="term" value="F:RNA binding"/>
    <property type="evidence" value="ECO:0007669"/>
    <property type="project" value="InterPro"/>
</dbReference>
<dbReference type="GO" id="GO:0003968">
    <property type="term" value="F:RNA-directed RNA polymerase activity"/>
    <property type="evidence" value="ECO:0007669"/>
    <property type="project" value="InterPro"/>
</dbReference>
<dbReference type="GO" id="GO:0006351">
    <property type="term" value="P:DNA-templated transcription"/>
    <property type="evidence" value="ECO:0007669"/>
    <property type="project" value="InterPro"/>
</dbReference>
<dbReference type="GO" id="GO:0019079">
    <property type="term" value="P:viral genome replication"/>
    <property type="evidence" value="ECO:0007669"/>
    <property type="project" value="InterPro"/>
</dbReference>
<dbReference type="CDD" id="cd21031">
    <property type="entry name" value="MEV_P-protein-C_like"/>
    <property type="match status" value="1"/>
</dbReference>
<dbReference type="Gene3D" id="1.20.5.110">
    <property type="match status" value="1"/>
</dbReference>
<dbReference type="Gene3D" id="1.10.8.10">
    <property type="entry name" value="DNA helicase RuvA subunit, C-terminal domain"/>
    <property type="match status" value="1"/>
</dbReference>
<dbReference type="InterPro" id="IPR004897">
    <property type="entry name" value="P/V_Pprotein_paramyxoviral"/>
</dbReference>
<dbReference type="InterPro" id="IPR028243">
    <property type="entry name" value="Paramyxo_P/V_N"/>
</dbReference>
<dbReference type="InterPro" id="IPR016075">
    <property type="entry name" value="RNA_pol_Pprot-P_XD_paramyxovir"/>
</dbReference>
<dbReference type="Pfam" id="PF03210">
    <property type="entry name" value="Paramyx_P_V_C"/>
    <property type="match status" value="1"/>
</dbReference>
<dbReference type="Pfam" id="PF13825">
    <property type="entry name" value="Paramyxo_P_V_N"/>
    <property type="match status" value="1"/>
</dbReference>
<dbReference type="SUPFAM" id="SSF101089">
    <property type="entry name" value="Phosphoprotein XD domain"/>
    <property type="match status" value="1"/>
</dbReference>
<feature type="chain" id="PRO_0000461469" description="Phosphoprotein">
    <location>
        <begin position="1"/>
        <end position="507"/>
    </location>
</feature>
<feature type="region of interest" description="Interaction with N0" evidence="3">
    <location>
        <begin position="1"/>
        <end position="48"/>
    </location>
</feature>
<feature type="region of interest" description="Disordered" evidence="5">
    <location>
        <begin position="40"/>
        <end position="100"/>
    </location>
</feature>
<feature type="region of interest" description="Disordered" evidence="5">
    <location>
        <begin position="134"/>
        <end position="163"/>
    </location>
</feature>
<feature type="region of interest" description="Disordered" evidence="5">
    <location>
        <begin position="201"/>
        <end position="232"/>
    </location>
</feature>
<feature type="region of interest" description="Disordered" evidence="5">
    <location>
        <begin position="250"/>
        <end position="273"/>
    </location>
</feature>
<feature type="region of interest" description="Disordered" evidence="5">
    <location>
        <begin position="285"/>
        <end position="309"/>
    </location>
</feature>
<feature type="region of interest" description="Multimerization" evidence="3">
    <location>
        <begin position="304"/>
        <end position="376"/>
    </location>
</feature>
<feature type="region of interest" description="Interaction with the L polymerase" evidence="4">
    <location>
        <begin position="361"/>
        <end position="377"/>
    </location>
</feature>
<feature type="region of interest" description="Interaction with the L polymerase" evidence="4">
    <location>
        <begin position="396"/>
        <end position="410"/>
    </location>
</feature>
<feature type="region of interest" description="X domain (XD)" evidence="4">
    <location>
        <begin position="457"/>
        <end position="507"/>
    </location>
</feature>
<feature type="region of interest" description="Interaction with the nucleocapsid (N-RNA)" evidence="3">
    <location>
        <begin position="459"/>
        <end position="507"/>
    </location>
</feature>
<feature type="compositionally biased region" description="Low complexity" evidence="5">
    <location>
        <begin position="134"/>
        <end position="145"/>
    </location>
</feature>
<feature type="compositionally biased region" description="Acidic residues" evidence="5">
    <location>
        <begin position="146"/>
        <end position="160"/>
    </location>
</feature>
<feature type="compositionally biased region" description="Low complexity" evidence="5">
    <location>
        <begin position="260"/>
        <end position="270"/>
    </location>
</feature>
<feature type="compositionally biased region" description="Polar residues" evidence="5">
    <location>
        <begin position="286"/>
        <end position="301"/>
    </location>
</feature>
<feature type="binding site" evidence="11">
    <location>
        <position position="314"/>
    </location>
    <ligand>
        <name>Ca(2+)</name>
        <dbReference type="ChEBI" id="CHEBI:29108"/>
    </ligand>
</feature>
<feature type="modified residue" description="Phosphoserine" evidence="3">
    <location>
        <position position="86"/>
    </location>
</feature>
<feature type="modified residue" description="Phosphoserine" evidence="3">
    <location>
        <position position="151"/>
    </location>
</feature>
<feature type="helix" evidence="12">
    <location>
        <begin position="310"/>
        <end position="339"/>
    </location>
</feature>
<feature type="helix" evidence="12">
    <location>
        <begin position="342"/>
        <end position="370"/>
    </location>
</feature>
<protein>
    <recommendedName>
        <fullName>Phosphoprotein</fullName>
        <shortName>Protein P</shortName>
    </recommendedName>
</protein>
<accession>Q83623</accession>
<organism>
    <name type="scientific">Measles virus (strain Edmonston B)</name>
    <name type="common">MeV</name>
    <name type="synonym">Subacute sclerose panencephalitis virus</name>
    <dbReference type="NCBI Taxonomy" id="70146"/>
    <lineage>
        <taxon>Viruses</taxon>
        <taxon>Riboviria</taxon>
        <taxon>Orthornavirae</taxon>
        <taxon>Negarnaviricota</taxon>
        <taxon>Haploviricotina</taxon>
        <taxon>Monjiviricetes</taxon>
        <taxon>Mononegavirales</taxon>
        <taxon>Paramyxoviridae</taxon>
        <taxon>Orthoparamyxovirinae</taxon>
        <taxon>Morbillivirus</taxon>
        <taxon>Morbillivirus hominis</taxon>
        <taxon>Measles morbillivirus</taxon>
    </lineage>
</organism>
<comment type="function">
    <text evidence="2 3 4">Essential cofactor of the RNA polymerase L that plays a central role in the transcription and replication by forming the polymerase complex with RNA polymerase L and recruiting L to the genomic N-RNA template for RNA synthesis (By similarity). Also plays a central role in the encapsidation of nascent RNA chains by forming the encapsidation complex with the nucleocapsid protein N (N-P complex). Acts as a chaperone for newly synthesized free N protein, so-called N0, allowing encapsidation of nascent RNA chains during replication (By similarity). The nucleoprotein protein N prevents excessive phosphorylation of P, which leads to down-regulation of viral transcription/ replication (By similarity). Participates, together with N, in the formation of viral factories (viroplasms), which are large inclusions in the host cytoplasm where replication takes place (By similarity).</text>
</comment>
<comment type="subunit">
    <text evidence="3 4 6 9">Homotetramer (PubMed:23576502). Interacts (via multimerization domain and XD domain) with polymerase L; this interaction forms the polymerase L-P complex (Probable). Interacts (via N-terminus) with N0 (via Ncore); this interaction allows P to chaperon N0 to avoid N polymerization and non-specific RNA binding before encapsidation (By similarity). Interacts (via C-terminus) with N-RNA template (via Ntail); this interaction maintains the P/L complex anchored to the nucleocapsid template during the sequential transcription (By similarity). Interacts (via C-terminus) with protein C this interaction allows C to associate with the ribonucleocapsid (By similarity).</text>
</comment>
<comment type="domain">
    <text evidence="1 2 3 6 7">The N-terminus consists of a long intrinsically disordered tail. The central part contains the coiled-coil multimerization domain (MD) (PubMed:23576502, PubMed:31086822). Forms a four-stranded coiled coil structure (PubMed:23576502, PubMed:31086822). The C-terminus constitutes the alpha-helical domain (XD) that binds to the nucleocapsid (N-RNA complex) (By similarity).</text>
</comment>
<comment type="PTM">
    <text evidence="3">Phosphorylation on serines by host CK2 is necessary for the formation of viral factories.</text>
</comment>
<comment type="similarity">
    <text evidence="8">Belongs to the morbillivirus P protein family.</text>
</comment>
<evidence type="ECO:0000250" key="1">
    <source>
        <dbReference type="UniProtKB" id="P04859"/>
    </source>
</evidence>
<evidence type="ECO:0000250" key="2">
    <source>
        <dbReference type="UniProtKB" id="P06162"/>
    </source>
</evidence>
<evidence type="ECO:0000250" key="3">
    <source>
        <dbReference type="UniProtKB" id="Q77M42"/>
    </source>
</evidence>
<evidence type="ECO:0000250" key="4">
    <source>
        <dbReference type="UniProtKB" id="Q9WMB4"/>
    </source>
</evidence>
<evidence type="ECO:0000256" key="5">
    <source>
        <dbReference type="SAM" id="MobiDB-lite"/>
    </source>
</evidence>
<evidence type="ECO:0000269" key="6">
    <source>
    </source>
</evidence>
<evidence type="ECO:0000269" key="7">
    <source>
    </source>
</evidence>
<evidence type="ECO:0000305" key="8"/>
<evidence type="ECO:0000305" key="9">
    <source>
    </source>
</evidence>
<evidence type="ECO:0007744" key="10">
    <source>
        <dbReference type="PDB" id="3ZDO"/>
    </source>
</evidence>
<evidence type="ECO:0007744" key="11">
    <source>
        <dbReference type="PDB" id="6HTL"/>
    </source>
</evidence>
<evidence type="ECO:0007829" key="12">
    <source>
        <dbReference type="PDB" id="3ZDO"/>
    </source>
</evidence>
<name>PHOSP_MEASF</name>
<proteinExistence type="evidence at protein level"/>
<organismHost>
    <name type="scientific">Homo sapiens</name>
    <name type="common">Human</name>
    <dbReference type="NCBI Taxonomy" id="9606"/>
</organismHost>
<sequence>MAEEQARHVKNGLECIRALKAEPIGSLAIEEAMAAWSEISDNPGQERATCREEKAGSSGLSKPCLSAIGSTEGGAPRIRGQGPGESDDDAETLGIPPRNLQASSTGLQCHYVYDHSGEAVKGIQDADSIMVQSGLDGDSTLSGGDNESENSDVDIGEPDTEGYAITDRGSAPISMGFRASDVETAEGGEIHELLRLQSRGNNFPKLGKTLNVPPPPDPGRASTSGTPIKKGTDARLASFGTEIASSLTGGATQCARKSPSEPSGPGAPAGNVPECVSNAALIQEWTPESGTTISPRSQNNEEGGDHYDDELFSDVQDIKTALAKIHEDNQKIISKLESLLLLKGEVESIKKQINRQNISISTLEGHLSSIMIAIPGLGKDPNDPTADVEINPDLKPIIGRDSGRALAEVLKKPVASRQLQGMTNGRTSSRGQLLKEFQLKPIGKKMSSAVGFVPDTGPASRSVIRSIIKSSRLEEDRKRYLMTLLDDIKGANDLAKFHQMLMKIIMK</sequence>
<keyword id="KW-0002">3D-structure</keyword>
<keyword id="KW-0106">Calcium</keyword>
<keyword id="KW-0479">Metal-binding</keyword>
<keyword id="KW-0597">Phosphoprotein</keyword>
<keyword id="KW-0691">RNA editing</keyword>
<keyword id="KW-0693">Viral RNA replication</keyword>